<dbReference type="EC" id="4.2.1.59" evidence="1"/>
<dbReference type="EMBL" id="CP000916">
    <property type="protein sequence ID" value="ACM23953.1"/>
    <property type="molecule type" value="Genomic_DNA"/>
</dbReference>
<dbReference type="RefSeq" id="WP_015920191.1">
    <property type="nucleotide sequence ID" value="NC_011978.1"/>
</dbReference>
<dbReference type="SMR" id="B9KAH0"/>
<dbReference type="STRING" id="309803.CTN_1777"/>
<dbReference type="KEGG" id="tna:CTN_1777"/>
<dbReference type="eggNOG" id="COG0764">
    <property type="taxonomic scope" value="Bacteria"/>
</dbReference>
<dbReference type="HOGENOM" id="CLU_078912_1_2_0"/>
<dbReference type="Proteomes" id="UP000000445">
    <property type="component" value="Chromosome"/>
</dbReference>
<dbReference type="GO" id="GO:0005737">
    <property type="term" value="C:cytoplasm"/>
    <property type="evidence" value="ECO:0007669"/>
    <property type="project" value="UniProtKB-SubCell"/>
</dbReference>
<dbReference type="GO" id="GO:0016020">
    <property type="term" value="C:membrane"/>
    <property type="evidence" value="ECO:0007669"/>
    <property type="project" value="GOC"/>
</dbReference>
<dbReference type="GO" id="GO:0019171">
    <property type="term" value="F:(3R)-hydroxyacyl-[acyl-carrier-protein] dehydratase activity"/>
    <property type="evidence" value="ECO:0007669"/>
    <property type="project" value="UniProtKB-EC"/>
</dbReference>
<dbReference type="GO" id="GO:0006633">
    <property type="term" value="P:fatty acid biosynthetic process"/>
    <property type="evidence" value="ECO:0007669"/>
    <property type="project" value="UniProtKB-UniRule"/>
</dbReference>
<dbReference type="GO" id="GO:0009245">
    <property type="term" value="P:lipid A biosynthetic process"/>
    <property type="evidence" value="ECO:0007669"/>
    <property type="project" value="UniProtKB-UniRule"/>
</dbReference>
<dbReference type="CDD" id="cd01288">
    <property type="entry name" value="FabZ"/>
    <property type="match status" value="1"/>
</dbReference>
<dbReference type="FunFam" id="3.10.129.10:FF:000001">
    <property type="entry name" value="3-hydroxyacyl-[acyl-carrier-protein] dehydratase FabZ"/>
    <property type="match status" value="1"/>
</dbReference>
<dbReference type="Gene3D" id="3.10.129.10">
    <property type="entry name" value="Hotdog Thioesterase"/>
    <property type="match status" value="1"/>
</dbReference>
<dbReference type="HAMAP" id="MF_00406">
    <property type="entry name" value="FabZ"/>
    <property type="match status" value="1"/>
</dbReference>
<dbReference type="InterPro" id="IPR013114">
    <property type="entry name" value="FabA_FabZ"/>
</dbReference>
<dbReference type="InterPro" id="IPR010084">
    <property type="entry name" value="FabZ"/>
</dbReference>
<dbReference type="InterPro" id="IPR029069">
    <property type="entry name" value="HotDog_dom_sf"/>
</dbReference>
<dbReference type="NCBIfam" id="TIGR01750">
    <property type="entry name" value="fabZ"/>
    <property type="match status" value="1"/>
</dbReference>
<dbReference type="NCBIfam" id="NF000582">
    <property type="entry name" value="PRK00006.1"/>
    <property type="match status" value="1"/>
</dbReference>
<dbReference type="PANTHER" id="PTHR30272">
    <property type="entry name" value="3-HYDROXYACYL-[ACYL-CARRIER-PROTEIN] DEHYDRATASE"/>
    <property type="match status" value="1"/>
</dbReference>
<dbReference type="PANTHER" id="PTHR30272:SF1">
    <property type="entry name" value="3-HYDROXYACYL-[ACYL-CARRIER-PROTEIN] DEHYDRATASE"/>
    <property type="match status" value="1"/>
</dbReference>
<dbReference type="Pfam" id="PF07977">
    <property type="entry name" value="FabA"/>
    <property type="match status" value="1"/>
</dbReference>
<dbReference type="SUPFAM" id="SSF54637">
    <property type="entry name" value="Thioesterase/thiol ester dehydrase-isomerase"/>
    <property type="match status" value="1"/>
</dbReference>
<sequence>MNIDYVRSILPHRYPFLLVDGVIEESEDRIVAFKNISISDPVFQGHFPEYPIYPGVLIIEGLAQTAGILLLKDLEGIPLFLGIDEARFKKEVRPGDKLIYEVKKIGEKLGTVQVEGVAKVENTIVAKAKLLLGVKKK</sequence>
<proteinExistence type="inferred from homology"/>
<comment type="function">
    <text evidence="1">Involved in unsaturated fatty acids biosynthesis. Catalyzes the dehydration of short chain beta-hydroxyacyl-ACPs and long chain saturated and unsaturated beta-hydroxyacyl-ACPs.</text>
</comment>
<comment type="catalytic activity">
    <reaction evidence="1">
        <text>a (3R)-hydroxyacyl-[ACP] = a (2E)-enoyl-[ACP] + H2O</text>
        <dbReference type="Rhea" id="RHEA:13097"/>
        <dbReference type="Rhea" id="RHEA-COMP:9925"/>
        <dbReference type="Rhea" id="RHEA-COMP:9945"/>
        <dbReference type="ChEBI" id="CHEBI:15377"/>
        <dbReference type="ChEBI" id="CHEBI:78784"/>
        <dbReference type="ChEBI" id="CHEBI:78827"/>
        <dbReference type="EC" id="4.2.1.59"/>
    </reaction>
</comment>
<comment type="subcellular location">
    <subcellularLocation>
        <location evidence="1">Cytoplasm</location>
    </subcellularLocation>
</comment>
<comment type="similarity">
    <text evidence="1">Belongs to the thioester dehydratase family. FabZ subfamily.</text>
</comment>
<name>FABZ_THENN</name>
<organism>
    <name type="scientific">Thermotoga neapolitana (strain ATCC 49049 / DSM 4359 / NBRC 107923 / NS-E)</name>
    <dbReference type="NCBI Taxonomy" id="309803"/>
    <lineage>
        <taxon>Bacteria</taxon>
        <taxon>Thermotogati</taxon>
        <taxon>Thermotogota</taxon>
        <taxon>Thermotogae</taxon>
        <taxon>Thermotogales</taxon>
        <taxon>Thermotogaceae</taxon>
        <taxon>Thermotoga</taxon>
    </lineage>
</organism>
<reference key="1">
    <citation type="submission" date="2007-11" db="EMBL/GenBank/DDBJ databases">
        <title>The genome sequence of the hyperthermophilic bacterium Thermotoga neapolitana.</title>
        <authorList>
            <person name="Lim S.K."/>
            <person name="Kim J.S."/>
            <person name="Cha S.H."/>
            <person name="Park B.C."/>
            <person name="Lee D.S."/>
            <person name="Tae H.S."/>
            <person name="Kim S.-J."/>
            <person name="Kim J.J."/>
            <person name="Park K.J."/>
            <person name="Lee S.Y."/>
        </authorList>
    </citation>
    <scope>NUCLEOTIDE SEQUENCE [LARGE SCALE GENOMIC DNA]</scope>
    <source>
        <strain>ATCC 49049 / DSM 4359 / NBRC 107923 / NS-E</strain>
    </source>
</reference>
<accession>B9KAH0</accession>
<protein>
    <recommendedName>
        <fullName evidence="1">3-hydroxyacyl-[acyl-carrier-protein] dehydratase FabZ</fullName>
        <ecNumber evidence="1">4.2.1.59</ecNumber>
    </recommendedName>
    <alternativeName>
        <fullName evidence="1">(3R)-hydroxymyristoyl-[acyl-carrier-protein] dehydratase</fullName>
        <shortName evidence="1">(3R)-hydroxymyristoyl-ACP dehydrase</shortName>
    </alternativeName>
    <alternativeName>
        <fullName evidence="1">Beta-hydroxyacyl-ACP dehydratase</fullName>
    </alternativeName>
</protein>
<feature type="chain" id="PRO_1000134719" description="3-hydroxyacyl-[acyl-carrier-protein] dehydratase FabZ">
    <location>
        <begin position="1"/>
        <end position="137"/>
    </location>
</feature>
<feature type="active site" evidence="1">
    <location>
        <position position="46"/>
    </location>
</feature>
<keyword id="KW-0963">Cytoplasm</keyword>
<keyword id="KW-0441">Lipid A biosynthesis</keyword>
<keyword id="KW-0444">Lipid biosynthesis</keyword>
<keyword id="KW-0443">Lipid metabolism</keyword>
<keyword id="KW-0456">Lyase</keyword>
<gene>
    <name evidence="1" type="primary">fabZ</name>
    <name type="ordered locus">CTN_1777</name>
</gene>
<evidence type="ECO:0000255" key="1">
    <source>
        <dbReference type="HAMAP-Rule" id="MF_00406"/>
    </source>
</evidence>